<protein>
    <recommendedName>
        <fullName evidence="1">UPF0102 protein LBL_1651</fullName>
    </recommendedName>
</protein>
<accession>Q050Z4</accession>
<dbReference type="EMBL" id="CP000348">
    <property type="protein sequence ID" value="ABJ79101.1"/>
    <property type="molecule type" value="Genomic_DNA"/>
</dbReference>
<dbReference type="RefSeq" id="WP_002728443.1">
    <property type="nucleotide sequence ID" value="NC_008508.1"/>
</dbReference>
<dbReference type="SMR" id="Q050Z4"/>
<dbReference type="KEGG" id="lbl:LBL_1651"/>
<dbReference type="HOGENOM" id="CLU_115353_3_1_12"/>
<dbReference type="GO" id="GO:0003676">
    <property type="term" value="F:nucleic acid binding"/>
    <property type="evidence" value="ECO:0007669"/>
    <property type="project" value="InterPro"/>
</dbReference>
<dbReference type="Gene3D" id="3.40.1350.10">
    <property type="match status" value="1"/>
</dbReference>
<dbReference type="HAMAP" id="MF_00048">
    <property type="entry name" value="UPF0102"/>
    <property type="match status" value="1"/>
</dbReference>
<dbReference type="InterPro" id="IPR011335">
    <property type="entry name" value="Restrct_endonuc-II-like"/>
</dbReference>
<dbReference type="InterPro" id="IPR011856">
    <property type="entry name" value="tRNA_endonuc-like_dom_sf"/>
</dbReference>
<dbReference type="InterPro" id="IPR003509">
    <property type="entry name" value="UPF0102_YraN-like"/>
</dbReference>
<dbReference type="NCBIfam" id="NF009157">
    <property type="entry name" value="PRK12497.4-3"/>
    <property type="match status" value="1"/>
</dbReference>
<dbReference type="PANTHER" id="PTHR34039">
    <property type="entry name" value="UPF0102 PROTEIN YRAN"/>
    <property type="match status" value="1"/>
</dbReference>
<dbReference type="PANTHER" id="PTHR34039:SF1">
    <property type="entry name" value="UPF0102 PROTEIN YRAN"/>
    <property type="match status" value="1"/>
</dbReference>
<dbReference type="Pfam" id="PF02021">
    <property type="entry name" value="UPF0102"/>
    <property type="match status" value="1"/>
</dbReference>
<dbReference type="SUPFAM" id="SSF52980">
    <property type="entry name" value="Restriction endonuclease-like"/>
    <property type="match status" value="1"/>
</dbReference>
<organism>
    <name type="scientific">Leptospira borgpetersenii serovar Hardjo-bovis (strain L550)</name>
    <dbReference type="NCBI Taxonomy" id="355276"/>
    <lineage>
        <taxon>Bacteria</taxon>
        <taxon>Pseudomonadati</taxon>
        <taxon>Spirochaetota</taxon>
        <taxon>Spirochaetia</taxon>
        <taxon>Leptospirales</taxon>
        <taxon>Leptospiraceae</taxon>
        <taxon>Leptospira</taxon>
    </lineage>
</organism>
<gene>
    <name type="ordered locus">LBL_1651</name>
</gene>
<comment type="similarity">
    <text evidence="1">Belongs to the UPF0102 family.</text>
</comment>
<name>Y1651_LEPBL</name>
<evidence type="ECO:0000255" key="1">
    <source>
        <dbReference type="HAMAP-Rule" id="MF_00048"/>
    </source>
</evidence>
<feature type="chain" id="PRO_1000009230" description="UPF0102 protein LBL_1651">
    <location>
        <begin position="1"/>
        <end position="116"/>
    </location>
</feature>
<sequence length="116" mass="13783">MSRFKKIKGDEGESIASDFLISIGHEILKRNYRFLYCEIDIISIKEEVLYFSEVKFWKEFESFDPRFTFNFAKQTRMRKAASGFLSENLSLQNHFVSFCLVSINEKKGCEYYPDLF</sequence>
<reference key="1">
    <citation type="journal article" date="2006" name="Proc. Natl. Acad. Sci. U.S.A.">
        <title>Genome reduction in Leptospira borgpetersenii reflects limited transmission potential.</title>
        <authorList>
            <person name="Bulach D.M."/>
            <person name="Zuerner R.L."/>
            <person name="Wilson P."/>
            <person name="Seemann T."/>
            <person name="McGrath A."/>
            <person name="Cullen P.A."/>
            <person name="Davis J."/>
            <person name="Johnson M."/>
            <person name="Kuczek E."/>
            <person name="Alt D.P."/>
            <person name="Peterson-Burch B."/>
            <person name="Coppel R.L."/>
            <person name="Rood J.I."/>
            <person name="Davies J.K."/>
            <person name="Adler B."/>
        </authorList>
    </citation>
    <scope>NUCLEOTIDE SEQUENCE [LARGE SCALE GENOMIC DNA]</scope>
    <source>
        <strain>L550</strain>
    </source>
</reference>
<proteinExistence type="inferred from homology"/>